<gene>
    <name type="primary">otud6b</name>
</gene>
<sequence>MDVAEENSEEALLIKQQRKEKKEVQAKIQCMKNSVPKNDKKRRKQMTEDIAKLEAEVEARHKEELEALAQKPTEPTQVSSITNGVTSLDLGSEEPVQQPRVSKAQKRREKKAAQEKERDDRIAEAEIANLSGARHLESQKLAQILAERELQIRQIPSDGHCMYRAIEHQLNEQGNSLTVANLRSQTADYMQKRAEDFLPFLTNSSTGDMYTQEEFQKYCTDIVNTPAWGGQLELRALSHILKTPIEVIQAESLPIVIGEEYSNKPITLVYMRHAYGLGEHYNSVEQLDTSTENS</sequence>
<feature type="chain" id="PRO_0000076283" description="Deubiquitinase OTUD6B">
    <location>
        <begin position="1"/>
        <end position="294"/>
    </location>
</feature>
<feature type="domain" description="OTU" evidence="3">
    <location>
        <begin position="150"/>
        <end position="287"/>
    </location>
</feature>
<feature type="region of interest" description="Disordered" evidence="4">
    <location>
        <begin position="85"/>
        <end position="120"/>
    </location>
</feature>
<feature type="region of interest" description="Cys-loop" evidence="1">
    <location>
        <begin position="155"/>
        <end position="161"/>
    </location>
</feature>
<feature type="region of interest" description="Variable-loop" evidence="1">
    <location>
        <begin position="222"/>
        <end position="232"/>
    </location>
</feature>
<feature type="region of interest" description="His-loop" evidence="1">
    <location>
        <begin position="270"/>
        <end position="280"/>
    </location>
</feature>
<feature type="compositionally biased region" description="Basic and acidic residues" evidence="4">
    <location>
        <begin position="111"/>
        <end position="120"/>
    </location>
</feature>
<feature type="active site" evidence="1">
    <location>
        <position position="158"/>
    </location>
</feature>
<feature type="active site" description="Nucleophile" evidence="2">
    <location>
        <position position="161"/>
    </location>
</feature>
<feature type="active site" evidence="1">
    <location>
        <position position="280"/>
    </location>
</feature>
<name>OTU6B_XENLA</name>
<organism>
    <name type="scientific">Xenopus laevis</name>
    <name type="common">African clawed frog</name>
    <dbReference type="NCBI Taxonomy" id="8355"/>
    <lineage>
        <taxon>Eukaryota</taxon>
        <taxon>Metazoa</taxon>
        <taxon>Chordata</taxon>
        <taxon>Craniata</taxon>
        <taxon>Vertebrata</taxon>
        <taxon>Euteleostomi</taxon>
        <taxon>Amphibia</taxon>
        <taxon>Batrachia</taxon>
        <taxon>Anura</taxon>
        <taxon>Pipoidea</taxon>
        <taxon>Pipidae</taxon>
        <taxon>Xenopodinae</taxon>
        <taxon>Xenopus</taxon>
        <taxon>Xenopus</taxon>
    </lineage>
</organism>
<evidence type="ECO:0000250" key="1"/>
<evidence type="ECO:0000250" key="2">
    <source>
        <dbReference type="UniProtKB" id="Q8N6M0"/>
    </source>
</evidence>
<evidence type="ECO:0000255" key="3">
    <source>
        <dbReference type="PROSITE-ProRule" id="PRU00139"/>
    </source>
</evidence>
<evidence type="ECO:0000256" key="4">
    <source>
        <dbReference type="SAM" id="MobiDB-lite"/>
    </source>
</evidence>
<evidence type="ECO:0000305" key="5"/>
<keyword id="KW-0378">Hydrolase</keyword>
<keyword id="KW-0645">Protease</keyword>
<keyword id="KW-1185">Reference proteome</keyword>
<keyword id="KW-0788">Thiol protease</keyword>
<keyword id="KW-0833">Ubl conjugation pathway</keyword>
<protein>
    <recommendedName>
        <fullName evidence="5">Deubiquitinase OTUD6B</fullName>
        <ecNumber evidence="2">3.4.19.12</ecNumber>
    </recommendedName>
</protein>
<proteinExistence type="evidence at transcript level"/>
<accession>Q6GM06</accession>
<dbReference type="EC" id="3.4.19.12" evidence="2"/>
<dbReference type="EMBL" id="BC074286">
    <property type="protein sequence ID" value="AAH74286.1"/>
    <property type="molecule type" value="mRNA"/>
</dbReference>
<dbReference type="RefSeq" id="NP_001086171.1">
    <property type="nucleotide sequence ID" value="NM_001092702.1"/>
</dbReference>
<dbReference type="SMR" id="Q6GM06"/>
<dbReference type="DNASU" id="444600"/>
<dbReference type="GeneID" id="444600"/>
<dbReference type="KEGG" id="xla:444600"/>
<dbReference type="AGR" id="Xenbase:XB-GENE-17335325"/>
<dbReference type="CTD" id="444600"/>
<dbReference type="Xenbase" id="XB-GENE-17335325">
    <property type="gene designation" value="otud6b.L"/>
</dbReference>
<dbReference type="OrthoDB" id="415023at2759"/>
<dbReference type="Proteomes" id="UP000186698">
    <property type="component" value="Chromosome 6L"/>
</dbReference>
<dbReference type="Bgee" id="444600">
    <property type="expression patterns" value="Expressed in muscle tissue and 19 other cell types or tissues"/>
</dbReference>
<dbReference type="GO" id="GO:0004843">
    <property type="term" value="F:cysteine-type deubiquitinase activity"/>
    <property type="evidence" value="ECO:0000250"/>
    <property type="project" value="UniProtKB"/>
</dbReference>
<dbReference type="GO" id="GO:0016579">
    <property type="term" value="P:protein deubiquitination"/>
    <property type="evidence" value="ECO:0000250"/>
    <property type="project" value="UniProtKB"/>
</dbReference>
<dbReference type="GO" id="GO:0006508">
    <property type="term" value="P:proteolysis"/>
    <property type="evidence" value="ECO:0007669"/>
    <property type="project" value="UniProtKB-KW"/>
</dbReference>
<dbReference type="CDD" id="cd22761">
    <property type="entry name" value="OTU_OTUD6"/>
    <property type="match status" value="1"/>
</dbReference>
<dbReference type="FunFam" id="3.90.70.80:FF:000003">
    <property type="entry name" value="OTU domain-containing protein 6B"/>
    <property type="match status" value="1"/>
</dbReference>
<dbReference type="Gene3D" id="3.90.70.80">
    <property type="match status" value="1"/>
</dbReference>
<dbReference type="InterPro" id="IPR003323">
    <property type="entry name" value="OTU_dom"/>
</dbReference>
<dbReference type="InterPro" id="IPR049772">
    <property type="entry name" value="OTU_OTUD6"/>
</dbReference>
<dbReference type="InterPro" id="IPR038765">
    <property type="entry name" value="Papain-like_cys_pep_sf"/>
</dbReference>
<dbReference type="InterPro" id="IPR050704">
    <property type="entry name" value="Peptidase_C85-like"/>
</dbReference>
<dbReference type="PANTHER" id="PTHR12419:SF10">
    <property type="entry name" value="DEUBIQUITINASE OTUD6B"/>
    <property type="match status" value="1"/>
</dbReference>
<dbReference type="PANTHER" id="PTHR12419">
    <property type="entry name" value="OTU DOMAIN CONTAINING PROTEIN"/>
    <property type="match status" value="1"/>
</dbReference>
<dbReference type="Pfam" id="PF02338">
    <property type="entry name" value="OTU"/>
    <property type="match status" value="1"/>
</dbReference>
<dbReference type="SUPFAM" id="SSF54001">
    <property type="entry name" value="Cysteine proteinases"/>
    <property type="match status" value="1"/>
</dbReference>
<dbReference type="PROSITE" id="PS50802">
    <property type="entry name" value="OTU"/>
    <property type="match status" value="1"/>
</dbReference>
<reference key="1">
    <citation type="submission" date="2004-06" db="EMBL/GenBank/DDBJ databases">
        <authorList>
            <consortium name="NIH - Xenopus Gene Collection (XGC) project"/>
        </authorList>
    </citation>
    <scope>NUCLEOTIDE SEQUENCE [LARGE SCALE MRNA]</scope>
    <source>
        <tissue>Eye</tissue>
    </source>
</reference>
<comment type="function">
    <text evidence="2">Deubiquitinating enzyme that may play a role in the ubiquitin-dependent regulation of different cellular processes.</text>
</comment>
<comment type="catalytic activity">
    <reaction evidence="2">
        <text>Thiol-dependent hydrolysis of ester, thioester, amide, peptide and isopeptide bonds formed by the C-terminal Gly of ubiquitin (a 76-residue protein attached to proteins as an intracellular targeting signal).</text>
        <dbReference type="EC" id="3.4.19.12"/>
    </reaction>
</comment>